<gene>
    <name evidence="1" type="primary">engB</name>
    <name type="ordered locus">THA_1787</name>
</gene>
<comment type="function">
    <text evidence="1">Necessary for normal cell division and for the maintenance of normal septation.</text>
</comment>
<comment type="cofactor">
    <cofactor evidence="1">
        <name>Mg(2+)</name>
        <dbReference type="ChEBI" id="CHEBI:18420"/>
    </cofactor>
</comment>
<comment type="similarity">
    <text evidence="1">Belongs to the TRAFAC class TrmE-Era-EngA-EngB-Septin-like GTPase superfamily. EngB GTPase family.</text>
</comment>
<protein>
    <recommendedName>
        <fullName evidence="1">Probable GTP-binding protein EngB</fullName>
    </recommendedName>
</protein>
<evidence type="ECO:0000255" key="1">
    <source>
        <dbReference type="HAMAP-Rule" id="MF_00321"/>
    </source>
</evidence>
<keyword id="KW-0131">Cell cycle</keyword>
<keyword id="KW-0132">Cell division</keyword>
<keyword id="KW-0342">GTP-binding</keyword>
<keyword id="KW-0460">Magnesium</keyword>
<keyword id="KW-0479">Metal-binding</keyword>
<keyword id="KW-0547">Nucleotide-binding</keyword>
<keyword id="KW-1185">Reference proteome</keyword>
<keyword id="KW-0717">Septation</keyword>
<dbReference type="EMBL" id="CP001185">
    <property type="protein sequence ID" value="ACJ76218.1"/>
    <property type="molecule type" value="Genomic_DNA"/>
</dbReference>
<dbReference type="RefSeq" id="WP_012580412.1">
    <property type="nucleotide sequence ID" value="NC_011653.1"/>
</dbReference>
<dbReference type="SMR" id="B7IDZ1"/>
<dbReference type="STRING" id="484019.THA_1787"/>
<dbReference type="KEGG" id="taf:THA_1787"/>
<dbReference type="eggNOG" id="COG0218">
    <property type="taxonomic scope" value="Bacteria"/>
</dbReference>
<dbReference type="HOGENOM" id="CLU_033732_3_0_0"/>
<dbReference type="OrthoDB" id="9804921at2"/>
<dbReference type="Proteomes" id="UP000002453">
    <property type="component" value="Chromosome"/>
</dbReference>
<dbReference type="GO" id="GO:0005829">
    <property type="term" value="C:cytosol"/>
    <property type="evidence" value="ECO:0007669"/>
    <property type="project" value="TreeGrafter"/>
</dbReference>
<dbReference type="GO" id="GO:0005525">
    <property type="term" value="F:GTP binding"/>
    <property type="evidence" value="ECO:0007669"/>
    <property type="project" value="UniProtKB-UniRule"/>
</dbReference>
<dbReference type="GO" id="GO:0046872">
    <property type="term" value="F:metal ion binding"/>
    <property type="evidence" value="ECO:0007669"/>
    <property type="project" value="UniProtKB-KW"/>
</dbReference>
<dbReference type="GO" id="GO:0000917">
    <property type="term" value="P:division septum assembly"/>
    <property type="evidence" value="ECO:0007669"/>
    <property type="project" value="UniProtKB-KW"/>
</dbReference>
<dbReference type="CDD" id="cd01876">
    <property type="entry name" value="YihA_EngB"/>
    <property type="match status" value="1"/>
</dbReference>
<dbReference type="Gene3D" id="3.40.50.300">
    <property type="entry name" value="P-loop containing nucleotide triphosphate hydrolases"/>
    <property type="match status" value="1"/>
</dbReference>
<dbReference type="HAMAP" id="MF_00321">
    <property type="entry name" value="GTPase_EngB"/>
    <property type="match status" value="1"/>
</dbReference>
<dbReference type="InterPro" id="IPR030393">
    <property type="entry name" value="G_ENGB_dom"/>
</dbReference>
<dbReference type="InterPro" id="IPR006073">
    <property type="entry name" value="GTP-bd"/>
</dbReference>
<dbReference type="InterPro" id="IPR019987">
    <property type="entry name" value="GTP-bd_ribosome_bio_YsxC"/>
</dbReference>
<dbReference type="InterPro" id="IPR027417">
    <property type="entry name" value="P-loop_NTPase"/>
</dbReference>
<dbReference type="InterPro" id="IPR005225">
    <property type="entry name" value="Small_GTP-bd"/>
</dbReference>
<dbReference type="NCBIfam" id="TIGR03598">
    <property type="entry name" value="GTPase_YsxC"/>
    <property type="match status" value="1"/>
</dbReference>
<dbReference type="NCBIfam" id="TIGR00231">
    <property type="entry name" value="small_GTP"/>
    <property type="match status" value="1"/>
</dbReference>
<dbReference type="PANTHER" id="PTHR11649:SF13">
    <property type="entry name" value="ENGB-TYPE G DOMAIN-CONTAINING PROTEIN"/>
    <property type="match status" value="1"/>
</dbReference>
<dbReference type="PANTHER" id="PTHR11649">
    <property type="entry name" value="MSS1/TRME-RELATED GTP-BINDING PROTEIN"/>
    <property type="match status" value="1"/>
</dbReference>
<dbReference type="Pfam" id="PF01926">
    <property type="entry name" value="MMR_HSR1"/>
    <property type="match status" value="1"/>
</dbReference>
<dbReference type="SUPFAM" id="SSF52540">
    <property type="entry name" value="P-loop containing nucleoside triphosphate hydrolases"/>
    <property type="match status" value="1"/>
</dbReference>
<dbReference type="PROSITE" id="PS51706">
    <property type="entry name" value="G_ENGB"/>
    <property type="match status" value="1"/>
</dbReference>
<reference key="1">
    <citation type="journal article" date="2009" name="J. Bacteriol.">
        <title>The genome of Thermosipho africanus TCF52B: lateral genetic connections to the Firmicutes and Archaea.</title>
        <authorList>
            <person name="Nesboe C.L."/>
            <person name="Bapteste E."/>
            <person name="Curtis B."/>
            <person name="Dahle H."/>
            <person name="Lopez P."/>
            <person name="Macleod D."/>
            <person name="Dlutek M."/>
            <person name="Bowman S."/>
            <person name="Zhaxybayeva O."/>
            <person name="Birkeland N.-K."/>
            <person name="Doolittle W.F."/>
        </authorList>
    </citation>
    <scope>NUCLEOTIDE SEQUENCE [LARGE SCALE GENOMIC DNA]</scope>
    <source>
        <strain>TCF52B</strain>
    </source>
</reference>
<name>ENGB_THEAB</name>
<organism>
    <name type="scientific">Thermosipho africanus (strain TCF52B)</name>
    <dbReference type="NCBI Taxonomy" id="484019"/>
    <lineage>
        <taxon>Bacteria</taxon>
        <taxon>Thermotogati</taxon>
        <taxon>Thermotogota</taxon>
        <taxon>Thermotogae</taxon>
        <taxon>Thermotogales</taxon>
        <taxon>Fervidobacteriaceae</taxon>
        <taxon>Thermosipho</taxon>
    </lineage>
</organism>
<accession>B7IDZ1</accession>
<proteinExistence type="inferred from homology"/>
<sequence length="194" mass="22664">MKIKSVELVKTIYKSNDKYPESLNGEFVFVGRSNVGKSTLLNILTGRNIAKTSKKPGKTASINFYKINNSFYFVDLPGYGYAKVSVEERARWRKIIENYFSKRAWNIKLVFVLIDGRHELQKNDEILLEWLKELELDFAIVMTKMDKLKNSERAKMIRYYKDLYGENYTIIPYSAITREGIDKIYELIEIFGGV</sequence>
<feature type="chain" id="PRO_1000119598" description="Probable GTP-binding protein EngB">
    <location>
        <begin position="1"/>
        <end position="194"/>
    </location>
</feature>
<feature type="domain" description="EngB-type G" evidence="1">
    <location>
        <begin position="23"/>
        <end position="194"/>
    </location>
</feature>
<feature type="binding site" evidence="1">
    <location>
        <begin position="31"/>
        <end position="38"/>
    </location>
    <ligand>
        <name>GTP</name>
        <dbReference type="ChEBI" id="CHEBI:37565"/>
    </ligand>
</feature>
<feature type="binding site" evidence="1">
    <location>
        <position position="38"/>
    </location>
    <ligand>
        <name>Mg(2+)</name>
        <dbReference type="ChEBI" id="CHEBI:18420"/>
    </ligand>
</feature>
<feature type="binding site" evidence="1">
    <location>
        <begin position="57"/>
        <end position="61"/>
    </location>
    <ligand>
        <name>GTP</name>
        <dbReference type="ChEBI" id="CHEBI:37565"/>
    </ligand>
</feature>
<feature type="binding site" evidence="1">
    <location>
        <position position="59"/>
    </location>
    <ligand>
        <name>Mg(2+)</name>
        <dbReference type="ChEBI" id="CHEBI:18420"/>
    </ligand>
</feature>
<feature type="binding site" evidence="1">
    <location>
        <begin position="75"/>
        <end position="78"/>
    </location>
    <ligand>
        <name>GTP</name>
        <dbReference type="ChEBI" id="CHEBI:37565"/>
    </ligand>
</feature>
<feature type="binding site" evidence="1">
    <location>
        <begin position="143"/>
        <end position="146"/>
    </location>
    <ligand>
        <name>GTP</name>
        <dbReference type="ChEBI" id="CHEBI:37565"/>
    </ligand>
</feature>
<feature type="binding site" evidence="1">
    <location>
        <begin position="173"/>
        <end position="175"/>
    </location>
    <ligand>
        <name>GTP</name>
        <dbReference type="ChEBI" id="CHEBI:37565"/>
    </ligand>
</feature>